<feature type="chain" id="PRO_0000048393" description="Tubulin beta chain">
    <location>
        <begin position="1"/>
        <end position="448"/>
    </location>
</feature>
<feature type="region of interest" description="Disordered" evidence="3">
    <location>
        <begin position="425"/>
        <end position="448"/>
    </location>
</feature>
<feature type="compositionally biased region" description="Acidic residues" evidence="3">
    <location>
        <begin position="432"/>
        <end position="448"/>
    </location>
</feature>
<feature type="binding site" evidence="2">
    <location>
        <position position="11"/>
    </location>
    <ligand>
        <name>GTP</name>
        <dbReference type="ChEBI" id="CHEBI:37565"/>
    </ligand>
</feature>
<feature type="binding site" evidence="1">
    <location>
        <position position="69"/>
    </location>
    <ligand>
        <name>GTP</name>
        <dbReference type="ChEBI" id="CHEBI:37565"/>
    </ligand>
</feature>
<feature type="binding site" evidence="1">
    <location>
        <position position="69"/>
    </location>
    <ligand>
        <name>Mg(2+)</name>
        <dbReference type="ChEBI" id="CHEBI:18420"/>
    </ligand>
</feature>
<feature type="binding site" evidence="2">
    <location>
        <position position="138"/>
    </location>
    <ligand>
        <name>GTP</name>
        <dbReference type="ChEBI" id="CHEBI:37565"/>
    </ligand>
</feature>
<feature type="binding site" evidence="2">
    <location>
        <position position="142"/>
    </location>
    <ligand>
        <name>GTP</name>
        <dbReference type="ChEBI" id="CHEBI:37565"/>
    </ligand>
</feature>
<feature type="binding site" evidence="2">
    <location>
        <position position="143"/>
    </location>
    <ligand>
        <name>GTP</name>
        <dbReference type="ChEBI" id="CHEBI:37565"/>
    </ligand>
</feature>
<feature type="binding site" evidence="2">
    <location>
        <position position="144"/>
    </location>
    <ligand>
        <name>GTP</name>
        <dbReference type="ChEBI" id="CHEBI:37565"/>
    </ligand>
</feature>
<feature type="binding site" evidence="2">
    <location>
        <position position="204"/>
    </location>
    <ligand>
        <name>GTP</name>
        <dbReference type="ChEBI" id="CHEBI:37565"/>
    </ligand>
</feature>
<feature type="binding site" evidence="2">
    <location>
        <position position="226"/>
    </location>
    <ligand>
        <name>GTP</name>
        <dbReference type="ChEBI" id="CHEBI:37565"/>
    </ligand>
</feature>
<proteinExistence type="inferred from homology"/>
<evidence type="ECO:0000250" key="1">
    <source>
        <dbReference type="UniProtKB" id="P68363"/>
    </source>
</evidence>
<evidence type="ECO:0000250" key="2">
    <source>
        <dbReference type="UniProtKB" id="Q13509"/>
    </source>
</evidence>
<evidence type="ECO:0000256" key="3">
    <source>
        <dbReference type="SAM" id="MobiDB-lite"/>
    </source>
</evidence>
<evidence type="ECO:0000305" key="4"/>
<keyword id="KW-0963">Cytoplasm</keyword>
<keyword id="KW-0206">Cytoskeleton</keyword>
<keyword id="KW-0342">GTP-binding</keyword>
<keyword id="KW-0460">Magnesium</keyword>
<keyword id="KW-0479">Metal-binding</keyword>
<keyword id="KW-0493">Microtubule</keyword>
<keyword id="KW-0547">Nucleotide-binding</keyword>
<protein>
    <recommendedName>
        <fullName>Tubulin beta chain</fullName>
    </recommendedName>
    <alternativeName>
        <fullName>Beta-tubulin</fullName>
    </alternativeName>
</protein>
<comment type="function">
    <text>Tubulin is the major constituent of microtubules, a cylinder consisting of laterally associated linear protofilaments composed of alpha- and beta-tubulin heterodimers. Microtubules grow by the addition of GTP-tubulin dimers to the microtubule end, where a stabilizing cap forms. Below the cap, tubulin dimers are in GDP-bound state, owing to GTPase activity of alpha-tubulin.</text>
</comment>
<comment type="cofactor">
    <cofactor evidence="1">
        <name>Mg(2+)</name>
        <dbReference type="ChEBI" id="CHEBI:18420"/>
    </cofactor>
</comment>
<comment type="subunit">
    <text>Dimer of alpha and beta chains. A typical microtubule is a hollow water-filled tube with an outer diameter of 25 nm and an inner diameter of 15 nM. Alpha-beta heterodimers associate head-to-tail to form protofilaments running lengthwise along the microtubule wall with the beta-tubulin subunit facing the microtubule plus end conferring a structural polarity. Microtubules usually have 13 protofilaments but different protofilament numbers can be found in some organisms and specialized cells.</text>
</comment>
<comment type="subcellular location">
    <subcellularLocation>
        <location>Cytoplasm</location>
        <location>Cytoskeleton</location>
    </subcellularLocation>
</comment>
<comment type="similarity">
    <text evidence="4">Belongs to the tubulin family.</text>
</comment>
<sequence length="448" mass="50072">MREIVHLQTGQCGNQIGAAFWQTISGEHGLDGSGVYNGSSDLQLERMNVYFNEASGNKYVPRAVLVDLEPGTMDAVRAGPFGQLFRPDNFVFGQSGAGNNWAKGHYTEGAELVDQVVDVVRREAEGCDCLQGFQITHSLGGGTGAGMGTLLISKIREEFPDRMMATYSVVPSPKVSDTVVEPYNATLSVHQLVEHSDETFCIDNEALYDICMRTLKLSNPSYGDLNHLVSAVMSGVTTCLRFPGQLNSDLRKLAVNMVPFPRLHFFMVGFAPLTSRGAHSFRAVSVPELTQQMFDPKNMMAASDFRNGRYLTCSAIFRGKVSMKEVEDQMRNIQSKNQTYFVEWIPNNIQTALCSIPPRGLKMSSTFIGNSTSIQELFKRVGDQFTAMFRRKAFLHWYTGEGMDEMEFTEAESNMNDLVSEYQQYQDASISEGEEEYLEEEEPLEHEE</sequence>
<accession>P22012</accession>
<name>TBB_ASPFL</name>
<reference key="1">
    <citation type="journal article" date="1990" name="Appl. Environ. Microbiol.">
        <title>Isolation and sequence analysis of a beta-tubulin gene from Aspergillus flavus and its use as a selectable marker.</title>
        <authorList>
            <person name="Seip E."/>
            <person name="Woloshuk C."/>
            <person name="Payne G."/>
            <person name="Curtis S."/>
        </authorList>
    </citation>
    <scope>NUCLEOTIDE SEQUENCE [GENOMIC DNA]</scope>
</reference>
<organism>
    <name type="scientific">Aspergillus flavus</name>
    <dbReference type="NCBI Taxonomy" id="5059"/>
    <lineage>
        <taxon>Eukaryota</taxon>
        <taxon>Fungi</taxon>
        <taxon>Dikarya</taxon>
        <taxon>Ascomycota</taxon>
        <taxon>Pezizomycotina</taxon>
        <taxon>Eurotiomycetes</taxon>
        <taxon>Eurotiomycetidae</taxon>
        <taxon>Eurotiales</taxon>
        <taxon>Aspergillaceae</taxon>
        <taxon>Aspergillus</taxon>
        <taxon>Aspergillus subgen. Circumdati</taxon>
    </lineage>
</organism>
<dbReference type="EMBL" id="M38265">
    <property type="protein sequence ID" value="AAA32689.1"/>
    <property type="molecule type" value="Genomic_DNA"/>
</dbReference>
<dbReference type="PIR" id="A43794">
    <property type="entry name" value="A43794"/>
</dbReference>
<dbReference type="SMR" id="P22012"/>
<dbReference type="VEuPathDB" id="FungiDB:AFLA_008802"/>
<dbReference type="VEuPathDB" id="FungiDB:F9C07_8286"/>
<dbReference type="GO" id="GO:0005737">
    <property type="term" value="C:cytoplasm"/>
    <property type="evidence" value="ECO:0007669"/>
    <property type="project" value="UniProtKB-KW"/>
</dbReference>
<dbReference type="GO" id="GO:0005874">
    <property type="term" value="C:microtubule"/>
    <property type="evidence" value="ECO:0007669"/>
    <property type="project" value="UniProtKB-KW"/>
</dbReference>
<dbReference type="GO" id="GO:0005525">
    <property type="term" value="F:GTP binding"/>
    <property type="evidence" value="ECO:0007669"/>
    <property type="project" value="UniProtKB-KW"/>
</dbReference>
<dbReference type="GO" id="GO:0003924">
    <property type="term" value="F:GTPase activity"/>
    <property type="evidence" value="ECO:0007669"/>
    <property type="project" value="InterPro"/>
</dbReference>
<dbReference type="GO" id="GO:0046872">
    <property type="term" value="F:metal ion binding"/>
    <property type="evidence" value="ECO:0007669"/>
    <property type="project" value="UniProtKB-KW"/>
</dbReference>
<dbReference type="GO" id="GO:0005200">
    <property type="term" value="F:structural constituent of cytoskeleton"/>
    <property type="evidence" value="ECO:0007669"/>
    <property type="project" value="InterPro"/>
</dbReference>
<dbReference type="GO" id="GO:0007017">
    <property type="term" value="P:microtubule-based process"/>
    <property type="evidence" value="ECO:0007669"/>
    <property type="project" value="InterPro"/>
</dbReference>
<dbReference type="CDD" id="cd02187">
    <property type="entry name" value="beta_tubulin"/>
    <property type="match status" value="1"/>
</dbReference>
<dbReference type="FunFam" id="1.10.287.600:FF:000003">
    <property type="entry name" value="Tubulin beta chain"/>
    <property type="match status" value="1"/>
</dbReference>
<dbReference type="FunFam" id="3.30.1330.20:FF:000002">
    <property type="entry name" value="Tubulin beta chain"/>
    <property type="match status" value="1"/>
</dbReference>
<dbReference type="FunFam" id="3.40.50.1440:FF:000009">
    <property type="entry name" value="Tubulin beta chain"/>
    <property type="match status" value="1"/>
</dbReference>
<dbReference type="Gene3D" id="1.10.287.600">
    <property type="entry name" value="Helix hairpin bin"/>
    <property type="match status" value="1"/>
</dbReference>
<dbReference type="Gene3D" id="3.30.1330.20">
    <property type="entry name" value="Tubulin/FtsZ, C-terminal domain"/>
    <property type="match status" value="1"/>
</dbReference>
<dbReference type="Gene3D" id="3.40.50.1440">
    <property type="entry name" value="Tubulin/FtsZ, GTPase domain"/>
    <property type="match status" value="1"/>
</dbReference>
<dbReference type="InterPro" id="IPR013838">
    <property type="entry name" value="Beta-tubulin_BS"/>
</dbReference>
<dbReference type="InterPro" id="IPR002453">
    <property type="entry name" value="Beta_tubulin"/>
</dbReference>
<dbReference type="InterPro" id="IPR008280">
    <property type="entry name" value="Tub_FtsZ_C"/>
</dbReference>
<dbReference type="InterPro" id="IPR000217">
    <property type="entry name" value="Tubulin"/>
</dbReference>
<dbReference type="InterPro" id="IPR037103">
    <property type="entry name" value="Tubulin/FtsZ-like_C"/>
</dbReference>
<dbReference type="InterPro" id="IPR018316">
    <property type="entry name" value="Tubulin/FtsZ_2-layer-sand-dom"/>
</dbReference>
<dbReference type="InterPro" id="IPR036525">
    <property type="entry name" value="Tubulin/FtsZ_GTPase_sf"/>
</dbReference>
<dbReference type="InterPro" id="IPR023123">
    <property type="entry name" value="Tubulin_C"/>
</dbReference>
<dbReference type="InterPro" id="IPR017975">
    <property type="entry name" value="Tubulin_CS"/>
</dbReference>
<dbReference type="InterPro" id="IPR003008">
    <property type="entry name" value="Tubulin_FtsZ_GTPase"/>
</dbReference>
<dbReference type="PANTHER" id="PTHR11588">
    <property type="entry name" value="TUBULIN"/>
    <property type="match status" value="1"/>
</dbReference>
<dbReference type="Pfam" id="PF00091">
    <property type="entry name" value="Tubulin"/>
    <property type="match status" value="1"/>
</dbReference>
<dbReference type="Pfam" id="PF03953">
    <property type="entry name" value="Tubulin_C"/>
    <property type="match status" value="1"/>
</dbReference>
<dbReference type="PRINTS" id="PR01163">
    <property type="entry name" value="BETATUBULIN"/>
</dbReference>
<dbReference type="PRINTS" id="PR01161">
    <property type="entry name" value="TUBULIN"/>
</dbReference>
<dbReference type="SMART" id="SM00864">
    <property type="entry name" value="Tubulin"/>
    <property type="match status" value="1"/>
</dbReference>
<dbReference type="SMART" id="SM00865">
    <property type="entry name" value="Tubulin_C"/>
    <property type="match status" value="1"/>
</dbReference>
<dbReference type="SUPFAM" id="SSF55307">
    <property type="entry name" value="Tubulin C-terminal domain-like"/>
    <property type="match status" value="1"/>
</dbReference>
<dbReference type="SUPFAM" id="SSF52490">
    <property type="entry name" value="Tubulin nucleotide-binding domain-like"/>
    <property type="match status" value="1"/>
</dbReference>
<dbReference type="PROSITE" id="PS00227">
    <property type="entry name" value="TUBULIN"/>
    <property type="match status" value="1"/>
</dbReference>
<dbReference type="PROSITE" id="PS00228">
    <property type="entry name" value="TUBULIN_B_AUTOREG"/>
    <property type="match status" value="1"/>
</dbReference>